<accession>B2V2S2</accession>
<organism>
    <name type="scientific">Clostridium botulinum (strain Alaska E43 / Type E3)</name>
    <dbReference type="NCBI Taxonomy" id="508767"/>
    <lineage>
        <taxon>Bacteria</taxon>
        <taxon>Bacillati</taxon>
        <taxon>Bacillota</taxon>
        <taxon>Clostridia</taxon>
        <taxon>Eubacteriales</taxon>
        <taxon>Clostridiaceae</taxon>
        <taxon>Clostridium</taxon>
    </lineage>
</organism>
<feature type="chain" id="PRO_0000364363" description="S-adenosylmethionine decarboxylase beta chain" evidence="1">
    <location>
        <begin position="1"/>
        <end position="121"/>
    </location>
</feature>
<feature type="chain" id="PRO_0000364364" description="S-adenosylmethionine decarboxylase alpha chain" evidence="1">
    <location>
        <begin position="122"/>
        <end position="272"/>
    </location>
</feature>
<feature type="active site" description="Schiff-base intermediate with substrate; via pyruvic acid" evidence="1">
    <location>
        <position position="122"/>
    </location>
</feature>
<feature type="active site" description="Proton acceptor; for processing activity" evidence="1">
    <location>
        <position position="127"/>
    </location>
</feature>
<feature type="active site" description="Proton donor; for catalytic activity" evidence="1">
    <location>
        <position position="150"/>
    </location>
</feature>
<feature type="site" description="Cleavage (non-hydrolytic); by autolysis" evidence="1">
    <location>
        <begin position="121"/>
        <end position="122"/>
    </location>
</feature>
<feature type="modified residue" description="Pyruvic acid (Ser); by autocatalysis" evidence="1">
    <location>
        <position position="122"/>
    </location>
</feature>
<comment type="function">
    <text evidence="1">Catalyzes the decarboxylation of S-adenosylmethionine to S-adenosylmethioninamine (dcAdoMet), the propylamine donor required for the synthesis of the polyamines spermine and spermidine from the diamine putrescine.</text>
</comment>
<comment type="catalytic activity">
    <reaction evidence="1">
        <text>S-adenosyl-L-methionine + H(+) = S-adenosyl 3-(methylsulfanyl)propylamine + CO2</text>
        <dbReference type="Rhea" id="RHEA:15981"/>
        <dbReference type="ChEBI" id="CHEBI:15378"/>
        <dbReference type="ChEBI" id="CHEBI:16526"/>
        <dbReference type="ChEBI" id="CHEBI:57443"/>
        <dbReference type="ChEBI" id="CHEBI:59789"/>
        <dbReference type="EC" id="4.1.1.50"/>
    </reaction>
</comment>
<comment type="cofactor">
    <cofactor evidence="1">
        <name>pyruvate</name>
        <dbReference type="ChEBI" id="CHEBI:15361"/>
    </cofactor>
    <text evidence="1">Binds 1 pyruvoyl group covalently per subunit.</text>
</comment>
<comment type="pathway">
    <text evidence="1">Amine and polyamine biosynthesis; S-adenosylmethioninamine biosynthesis; S-adenosylmethioninamine from S-adenosyl-L-methionine: step 1/1.</text>
</comment>
<comment type="subunit">
    <text evidence="1">Heterooctamer of four alpha and four beta chains arranged as a tetramer of alpha/beta heterodimers.</text>
</comment>
<comment type="PTM">
    <text evidence="1">Is synthesized initially as an inactive proenzyme. Formation of the active enzyme involves a self-maturation process in which the active site pyruvoyl group is generated from an internal serine residue via an autocatalytic post-translational modification. Two non-identical subunits are generated from the proenzyme in this reaction, and the pyruvate is formed at the N-terminus of the alpha chain, which is derived from the carboxyl end of the proenzyme. The post-translation cleavage follows an unusual pathway, termed non-hydrolytic serinolysis, in which the side chain hydroxyl group of the serine supplies its oxygen atom to form the C-terminus of the beta chain, while the remainder of the serine residue undergoes an oxidative deamination to produce ammonia and the pyruvoyl group blocking the N-terminus of the alpha chain.</text>
</comment>
<comment type="similarity">
    <text evidence="1">Belongs to the prokaryotic AdoMetDC family. Type 2 subfamily.</text>
</comment>
<keyword id="KW-0068">Autocatalytic cleavage</keyword>
<keyword id="KW-0210">Decarboxylase</keyword>
<keyword id="KW-0456">Lyase</keyword>
<keyword id="KW-0620">Polyamine biosynthesis</keyword>
<keyword id="KW-0670">Pyruvate</keyword>
<keyword id="KW-0949">S-adenosyl-L-methionine</keyword>
<keyword id="KW-0704">Schiff base</keyword>
<keyword id="KW-0745">Spermidine biosynthesis</keyword>
<keyword id="KW-0865">Zymogen</keyword>
<gene>
    <name evidence="1" type="primary">speD</name>
    <name type="ordered locus">CLH_0945</name>
</gene>
<sequence length="272" mass="31512">MMLGLENKLKLYGFNNLTKTLSFNIYDVCYAKSEREQKDYIAYIDEQYNSERLTNILCDVTEMIGAHVLNISKQDYDPQGASVTILISEETLAVKEIDKSCNLGQIDILKTRDTIVGHLDKSHVTVHTYPEYHPDNSIATFRVDIDVSTCGEVSPVNALNYLIGSFDSDIITIDYRVRGFTRDIDGKKLFIDHKITSIQDYIDENTLKKYDAVDINVYQSNIFHTKMLIKEIELQNYLFNRDVYEIKPKQRLEIENNLRKEMIEIFSGTNIY</sequence>
<dbReference type="EC" id="4.1.1.50" evidence="1"/>
<dbReference type="EMBL" id="CP001078">
    <property type="protein sequence ID" value="ACD53982.1"/>
    <property type="molecule type" value="Genomic_DNA"/>
</dbReference>
<dbReference type="KEGG" id="cbt:CLH_0945"/>
<dbReference type="HOGENOM" id="CLU_092007_0_0_9"/>
<dbReference type="UniPathway" id="UPA00331">
    <property type="reaction ID" value="UER00451"/>
</dbReference>
<dbReference type="GO" id="GO:0005829">
    <property type="term" value="C:cytosol"/>
    <property type="evidence" value="ECO:0007669"/>
    <property type="project" value="TreeGrafter"/>
</dbReference>
<dbReference type="GO" id="GO:0004014">
    <property type="term" value="F:adenosylmethionine decarboxylase activity"/>
    <property type="evidence" value="ECO:0007669"/>
    <property type="project" value="UniProtKB-UniRule"/>
</dbReference>
<dbReference type="GO" id="GO:0008295">
    <property type="term" value="P:spermidine biosynthetic process"/>
    <property type="evidence" value="ECO:0007669"/>
    <property type="project" value="UniProtKB-UniRule"/>
</dbReference>
<dbReference type="Gene3D" id="3.60.90.10">
    <property type="entry name" value="S-adenosylmethionine decarboxylase"/>
    <property type="match status" value="1"/>
</dbReference>
<dbReference type="HAMAP" id="MF_00465">
    <property type="entry name" value="AdoMetDC_2"/>
    <property type="match status" value="1"/>
</dbReference>
<dbReference type="InterPro" id="IPR003826">
    <property type="entry name" value="AdoMetDC_fam_prok"/>
</dbReference>
<dbReference type="InterPro" id="IPR009165">
    <property type="entry name" value="S-AdoMet_deCO2ase_bac"/>
</dbReference>
<dbReference type="InterPro" id="IPR016067">
    <property type="entry name" value="S-AdoMet_deCO2ase_core"/>
</dbReference>
<dbReference type="NCBIfam" id="TIGR03331">
    <property type="entry name" value="SAM_DCase_Eco"/>
    <property type="match status" value="1"/>
</dbReference>
<dbReference type="PANTHER" id="PTHR33866">
    <property type="entry name" value="S-ADENOSYLMETHIONINE DECARBOXYLASE PROENZYME"/>
    <property type="match status" value="1"/>
</dbReference>
<dbReference type="PANTHER" id="PTHR33866:SF1">
    <property type="entry name" value="S-ADENOSYLMETHIONINE DECARBOXYLASE PROENZYME"/>
    <property type="match status" value="1"/>
</dbReference>
<dbReference type="Pfam" id="PF02675">
    <property type="entry name" value="AdoMet_dc"/>
    <property type="match status" value="1"/>
</dbReference>
<dbReference type="PIRSF" id="PIRSF001356">
    <property type="entry name" value="SAM_decarboxylas"/>
    <property type="match status" value="1"/>
</dbReference>
<dbReference type="SUPFAM" id="SSF56276">
    <property type="entry name" value="S-adenosylmethionine decarboxylase"/>
    <property type="match status" value="1"/>
</dbReference>
<name>SPED_CLOBA</name>
<proteinExistence type="inferred from homology"/>
<reference key="1">
    <citation type="submission" date="2008-05" db="EMBL/GenBank/DDBJ databases">
        <title>Complete genome sequence of Clostridium botulinum E3 str. Alaska E43.</title>
        <authorList>
            <person name="Brinkac L.M."/>
            <person name="Brown J.L."/>
            <person name="Bruce D."/>
            <person name="Detter C."/>
            <person name="Munk C."/>
            <person name="Smith L.A."/>
            <person name="Smith T.J."/>
            <person name="Sutton G."/>
            <person name="Brettin T.S."/>
        </authorList>
    </citation>
    <scope>NUCLEOTIDE SEQUENCE [LARGE SCALE GENOMIC DNA]</scope>
    <source>
        <strain>Alaska E43 / Type E3</strain>
    </source>
</reference>
<protein>
    <recommendedName>
        <fullName evidence="1">S-adenosylmethionine decarboxylase proenzyme</fullName>
        <shortName evidence="1">AdoMetDC</shortName>
        <shortName evidence="1">SAMDC</shortName>
        <ecNumber evidence="1">4.1.1.50</ecNumber>
    </recommendedName>
    <component>
        <recommendedName>
            <fullName evidence="1">S-adenosylmethionine decarboxylase beta chain</fullName>
        </recommendedName>
    </component>
    <component>
        <recommendedName>
            <fullName evidence="1">S-adenosylmethionine decarboxylase alpha chain</fullName>
        </recommendedName>
    </component>
</protein>
<evidence type="ECO:0000255" key="1">
    <source>
        <dbReference type="HAMAP-Rule" id="MF_00465"/>
    </source>
</evidence>